<reference key="1">
    <citation type="journal article" date="1997" name="J. Bacteriol.">
        <title>Complete genome sequence of Methanobacterium thermoautotrophicum deltaH: functional analysis and comparative genomics.</title>
        <authorList>
            <person name="Smith D.R."/>
            <person name="Doucette-Stamm L.A."/>
            <person name="Deloughery C."/>
            <person name="Lee H.-M."/>
            <person name="Dubois J."/>
            <person name="Aldredge T."/>
            <person name="Bashirzadeh R."/>
            <person name="Blakely D."/>
            <person name="Cook R."/>
            <person name="Gilbert K."/>
            <person name="Harrison D."/>
            <person name="Hoang L."/>
            <person name="Keagle P."/>
            <person name="Lumm W."/>
            <person name="Pothier B."/>
            <person name="Qiu D."/>
            <person name="Spadafora R."/>
            <person name="Vicare R."/>
            <person name="Wang Y."/>
            <person name="Wierzbowski J."/>
            <person name="Gibson R."/>
            <person name="Jiwani N."/>
            <person name="Caruso A."/>
            <person name="Bush D."/>
            <person name="Safer H."/>
            <person name="Patwell D."/>
            <person name="Prabhakar S."/>
            <person name="McDougall S."/>
            <person name="Shimer G."/>
            <person name="Goyal A."/>
            <person name="Pietrovski S."/>
            <person name="Church G.M."/>
            <person name="Daniels C.J."/>
            <person name="Mao J.-I."/>
            <person name="Rice P."/>
            <person name="Noelling J."/>
            <person name="Reeve J.N."/>
        </authorList>
    </citation>
    <scope>NUCLEOTIDE SEQUENCE [LARGE SCALE GENOMIC DNA]</scope>
    <source>
        <strain>ATCC 29096 / DSM 1053 / JCM 10044 / NBRC 100330 / Delta H</strain>
    </source>
</reference>
<reference key="2">
    <citation type="journal article" date="1999" name="Biochimie">
        <title>Phenylalanyl-tRNA synthetase from the archaeon Methanobacterium thermoautotrophicum is an (alphabeta)2 heterotetrameric protein.</title>
        <authorList>
            <person name="Das R."/>
            <person name="Vothknecht U.C."/>
        </authorList>
    </citation>
    <scope>SUBUNIT</scope>
</reference>
<comment type="catalytic activity">
    <reaction evidence="1">
        <text>tRNA(Phe) + L-phenylalanine + ATP = L-phenylalanyl-tRNA(Phe) + AMP + diphosphate + H(+)</text>
        <dbReference type="Rhea" id="RHEA:19413"/>
        <dbReference type="Rhea" id="RHEA-COMP:9668"/>
        <dbReference type="Rhea" id="RHEA-COMP:9699"/>
        <dbReference type="ChEBI" id="CHEBI:15378"/>
        <dbReference type="ChEBI" id="CHEBI:30616"/>
        <dbReference type="ChEBI" id="CHEBI:33019"/>
        <dbReference type="ChEBI" id="CHEBI:58095"/>
        <dbReference type="ChEBI" id="CHEBI:78442"/>
        <dbReference type="ChEBI" id="CHEBI:78531"/>
        <dbReference type="ChEBI" id="CHEBI:456215"/>
        <dbReference type="EC" id="6.1.1.20"/>
    </reaction>
</comment>
<comment type="cofactor">
    <cofactor evidence="1">
        <name>Mg(2+)</name>
        <dbReference type="ChEBI" id="CHEBI:18420"/>
    </cofactor>
    <text evidence="1">Binds 2 magnesium ions per tetramer.</text>
</comment>
<comment type="subunit">
    <text evidence="1 2">Tetramer of two alpha and two beta subunits.</text>
</comment>
<comment type="subcellular location">
    <subcellularLocation>
        <location evidence="1">Cytoplasm</location>
    </subcellularLocation>
</comment>
<comment type="similarity">
    <text evidence="1">Belongs to the class-II aminoacyl-tRNA synthetase family. Phe-tRNA synthetase alpha subunit type 2 subfamily.</text>
</comment>
<name>SYFA_METTH</name>
<evidence type="ECO:0000255" key="1">
    <source>
        <dbReference type="HAMAP-Rule" id="MF_00282"/>
    </source>
</evidence>
<evidence type="ECO:0000269" key="2">
    <source>
    </source>
</evidence>
<feature type="chain" id="PRO_0000126813" description="Phenylalanine--tRNA ligase alpha subunit">
    <location>
        <begin position="1"/>
        <end position="511"/>
    </location>
</feature>
<feature type="binding site" evidence="1">
    <location>
        <position position="352"/>
    </location>
    <ligand>
        <name>L-phenylalanine</name>
        <dbReference type="ChEBI" id="CHEBI:58095"/>
    </ligand>
</feature>
<feature type="binding site" evidence="1">
    <location>
        <begin position="390"/>
        <end position="392"/>
    </location>
    <ligand>
        <name>L-phenylalanine</name>
        <dbReference type="ChEBI" id="CHEBI:58095"/>
    </ligand>
</feature>
<feature type="binding site" evidence="1">
    <location>
        <position position="429"/>
    </location>
    <ligand>
        <name>L-phenylalanine</name>
        <dbReference type="ChEBI" id="CHEBI:58095"/>
    </ligand>
</feature>
<feature type="binding site" evidence="1">
    <location>
        <position position="455"/>
    </location>
    <ligand>
        <name>L-phenylalanine</name>
        <dbReference type="ChEBI" id="CHEBI:58095"/>
    </ligand>
</feature>
<proteinExistence type="evidence at protein level"/>
<dbReference type="EC" id="6.1.1.20" evidence="1"/>
<dbReference type="EMBL" id="AE000666">
    <property type="protein sequence ID" value="AAB85246.1"/>
    <property type="molecule type" value="Genomic_DNA"/>
</dbReference>
<dbReference type="PIR" id="C69199">
    <property type="entry name" value="C69199"/>
</dbReference>
<dbReference type="RefSeq" id="WP_010876381.1">
    <property type="nucleotide sequence ID" value="NC_000916.1"/>
</dbReference>
<dbReference type="SMR" id="O26837"/>
<dbReference type="FunCoup" id="O26837">
    <property type="interactions" value="240"/>
</dbReference>
<dbReference type="IntAct" id="O26837">
    <property type="interactions" value="1"/>
</dbReference>
<dbReference type="STRING" id="187420.MTH_742"/>
<dbReference type="PaxDb" id="187420-MTH_742"/>
<dbReference type="EnsemblBacteria" id="AAB85246">
    <property type="protein sequence ID" value="AAB85246"/>
    <property type="gene ID" value="MTH_742"/>
</dbReference>
<dbReference type="KEGG" id="mth:MTH_742"/>
<dbReference type="PATRIC" id="fig|187420.15.peg.730"/>
<dbReference type="HOGENOM" id="CLU_025086_2_2_2"/>
<dbReference type="InParanoid" id="O26837"/>
<dbReference type="Proteomes" id="UP000005223">
    <property type="component" value="Chromosome"/>
</dbReference>
<dbReference type="GO" id="GO:0005737">
    <property type="term" value="C:cytoplasm"/>
    <property type="evidence" value="ECO:0007669"/>
    <property type="project" value="UniProtKB-SubCell"/>
</dbReference>
<dbReference type="GO" id="GO:0005524">
    <property type="term" value="F:ATP binding"/>
    <property type="evidence" value="ECO:0007669"/>
    <property type="project" value="UniProtKB-UniRule"/>
</dbReference>
<dbReference type="GO" id="GO:0000287">
    <property type="term" value="F:magnesium ion binding"/>
    <property type="evidence" value="ECO:0007669"/>
    <property type="project" value="UniProtKB-UniRule"/>
</dbReference>
<dbReference type="GO" id="GO:0004826">
    <property type="term" value="F:phenylalanine-tRNA ligase activity"/>
    <property type="evidence" value="ECO:0007669"/>
    <property type="project" value="UniProtKB-UniRule"/>
</dbReference>
<dbReference type="GO" id="GO:0000049">
    <property type="term" value="F:tRNA binding"/>
    <property type="evidence" value="ECO:0007669"/>
    <property type="project" value="InterPro"/>
</dbReference>
<dbReference type="GO" id="GO:0006432">
    <property type="term" value="P:phenylalanyl-tRNA aminoacylation"/>
    <property type="evidence" value="ECO:0007669"/>
    <property type="project" value="UniProtKB-UniRule"/>
</dbReference>
<dbReference type="CDD" id="cd00496">
    <property type="entry name" value="PheRS_alpha_core"/>
    <property type="match status" value="1"/>
</dbReference>
<dbReference type="FunFam" id="3.30.930.10:FF:000095">
    <property type="entry name" value="Phenylalanine--tRNA ligase alpha subunit"/>
    <property type="match status" value="1"/>
</dbReference>
<dbReference type="Gene3D" id="3.30.930.10">
    <property type="entry name" value="Bira Bifunctional Protein, Domain 2"/>
    <property type="match status" value="1"/>
</dbReference>
<dbReference type="Gene3D" id="1.10.10.10">
    <property type="entry name" value="Winged helix-like DNA-binding domain superfamily/Winged helix DNA-binding domain"/>
    <property type="match status" value="1"/>
</dbReference>
<dbReference type="HAMAP" id="MF_00282">
    <property type="entry name" value="Phe_tRNA_synth_alpha2"/>
    <property type="match status" value="1"/>
</dbReference>
<dbReference type="InterPro" id="IPR006195">
    <property type="entry name" value="aa-tRNA-synth_II"/>
</dbReference>
<dbReference type="InterPro" id="IPR045864">
    <property type="entry name" value="aa-tRNA-synth_II/BPL/LPL"/>
</dbReference>
<dbReference type="InterPro" id="IPR004529">
    <property type="entry name" value="Phe-tRNA-synth_IIc_asu"/>
</dbReference>
<dbReference type="InterPro" id="IPR022917">
    <property type="entry name" value="Phe_tRNA_ligase_alpha_bac/arc"/>
</dbReference>
<dbReference type="InterPro" id="IPR002319">
    <property type="entry name" value="Phenylalanyl-tRNA_Synthase"/>
</dbReference>
<dbReference type="InterPro" id="IPR036388">
    <property type="entry name" value="WH-like_DNA-bd_sf"/>
</dbReference>
<dbReference type="InterPro" id="IPR036390">
    <property type="entry name" value="WH_DNA-bd_sf"/>
</dbReference>
<dbReference type="NCBIfam" id="TIGR00468">
    <property type="entry name" value="pheS"/>
    <property type="match status" value="1"/>
</dbReference>
<dbReference type="NCBIfam" id="NF003210">
    <property type="entry name" value="PRK04172.1"/>
    <property type="match status" value="1"/>
</dbReference>
<dbReference type="PANTHER" id="PTHR11538:SF40">
    <property type="entry name" value="PHENYLALANINE--TRNA LIGASE ALPHA SUBUNIT"/>
    <property type="match status" value="1"/>
</dbReference>
<dbReference type="PANTHER" id="PTHR11538">
    <property type="entry name" value="PHENYLALANYL-TRNA SYNTHETASE"/>
    <property type="match status" value="1"/>
</dbReference>
<dbReference type="Pfam" id="PF01409">
    <property type="entry name" value="tRNA-synt_2d"/>
    <property type="match status" value="1"/>
</dbReference>
<dbReference type="SUPFAM" id="SSF55681">
    <property type="entry name" value="Class II aaRS and biotin synthetases"/>
    <property type="match status" value="1"/>
</dbReference>
<dbReference type="SUPFAM" id="SSF46785">
    <property type="entry name" value="Winged helix' DNA-binding domain"/>
    <property type="match status" value="1"/>
</dbReference>
<dbReference type="PROSITE" id="PS50862">
    <property type="entry name" value="AA_TRNA_LIGASE_II"/>
    <property type="match status" value="1"/>
</dbReference>
<gene>
    <name evidence="1" type="primary">pheS</name>
    <name type="ordered locus">MTH_742</name>
</gene>
<accession>O26837</accession>
<sequence>MMDLDRIIDQLHIYEKKVLKAFEGSDKPLKPEEIAESQKIDIKSVMSASGALESRGFVRVMKDADEVVSLTEDGESCAREGLPERRLIEALKGEEELEMSELSRRAGLDKKEAGIGIGWLMRKGWGRISQGMVSAVSDETPERGADERLLELLLERGSVRIRELPDELRGALKDLKGRKGIVDIRKIKRHTIELTTEGRKLLERGIEIVEEATQVTHEHLKSGAWRKLHYRGYNIDAEYPLVYPGKMHPLRRIIDEIRSIFLKLGFTESRGPIVESAFWNFDCLFQPQDHAAREMQDTFYVKNPAVTDLPCEDLVRAVQDAHETGGSTGSEGWQYEWDRDVARQSVLRTHTTCVSARFLSENEPPLKMFSVGRVFRRETITYKHLPEFHQVEGIVAGDEVNFRNLLGILREFYRKLGFEVRFRPAYFPYTYLSTECEIYLPEKKSWIELGGAGMFRPEVLEPLGVETPVAAFGLGIERLAMIRFDIKDIRMLYQSDLGWLRGLPVTGDLEL</sequence>
<organism>
    <name type="scientific">Methanothermobacter thermautotrophicus (strain ATCC 29096 / DSM 1053 / JCM 10044 / NBRC 100330 / Delta H)</name>
    <name type="common">Methanobacterium thermoautotrophicum</name>
    <dbReference type="NCBI Taxonomy" id="187420"/>
    <lineage>
        <taxon>Archaea</taxon>
        <taxon>Methanobacteriati</taxon>
        <taxon>Methanobacteriota</taxon>
        <taxon>Methanomada group</taxon>
        <taxon>Methanobacteria</taxon>
        <taxon>Methanobacteriales</taxon>
        <taxon>Methanobacteriaceae</taxon>
        <taxon>Methanothermobacter</taxon>
    </lineage>
</organism>
<protein>
    <recommendedName>
        <fullName evidence="1">Phenylalanine--tRNA ligase alpha subunit</fullName>
        <ecNumber evidence="1">6.1.1.20</ecNumber>
    </recommendedName>
    <alternativeName>
        <fullName evidence="1">Phenylalanyl-tRNA synthetase alpha subunit</fullName>
        <shortName evidence="1">PheRS</shortName>
    </alternativeName>
</protein>
<keyword id="KW-0030">Aminoacyl-tRNA synthetase</keyword>
<keyword id="KW-0067">ATP-binding</keyword>
<keyword id="KW-0963">Cytoplasm</keyword>
<keyword id="KW-0436">Ligase</keyword>
<keyword id="KW-0460">Magnesium</keyword>
<keyword id="KW-0479">Metal-binding</keyword>
<keyword id="KW-0547">Nucleotide-binding</keyword>
<keyword id="KW-0648">Protein biosynthesis</keyword>
<keyword id="KW-1185">Reference proteome</keyword>